<name>PDI1_SCHPO</name>
<keyword id="KW-1015">Disulfide bond</keyword>
<keyword id="KW-0256">Endoplasmic reticulum</keyword>
<keyword id="KW-0325">Glycoprotein</keyword>
<keyword id="KW-0413">Isomerase</keyword>
<keyword id="KW-0676">Redox-active center</keyword>
<keyword id="KW-1185">Reference proteome</keyword>
<keyword id="KW-0677">Repeat</keyword>
<keyword id="KW-0732">Signal</keyword>
<proteinExistence type="inferred from homology"/>
<evidence type="ECO:0000250" key="1"/>
<evidence type="ECO:0000255" key="2"/>
<evidence type="ECO:0000255" key="3">
    <source>
        <dbReference type="PROSITE-ProRule" id="PRU00691"/>
    </source>
</evidence>
<evidence type="ECO:0000255" key="4">
    <source>
        <dbReference type="PROSITE-ProRule" id="PRU10138"/>
    </source>
</evidence>
<evidence type="ECO:0000256" key="5">
    <source>
        <dbReference type="SAM" id="MobiDB-lite"/>
    </source>
</evidence>
<evidence type="ECO:0000305" key="6"/>
<feature type="signal peptide" evidence="2">
    <location>
        <begin position="1"/>
        <end position="22"/>
    </location>
</feature>
<feature type="chain" id="PRO_0000034216" description="Putative protein disulfide-isomerase C1F5.02">
    <location>
        <begin position="23"/>
        <end position="492"/>
    </location>
</feature>
<feature type="domain" description="Thioredoxin 1" evidence="3">
    <location>
        <begin position="23"/>
        <end position="128"/>
    </location>
</feature>
<feature type="domain" description="Thioredoxin 2" evidence="3">
    <location>
        <begin position="323"/>
        <end position="462"/>
    </location>
</feature>
<feature type="region of interest" description="Disordered" evidence="5">
    <location>
        <begin position="468"/>
        <end position="492"/>
    </location>
</feature>
<feature type="short sequence motif" description="Prevents secretion from ER" evidence="4">
    <location>
        <begin position="489"/>
        <end position="492"/>
    </location>
</feature>
<feature type="compositionally biased region" description="Acidic residues" evidence="5">
    <location>
        <begin position="477"/>
        <end position="492"/>
    </location>
</feature>
<feature type="active site" description="Nucleophile" evidence="1">
    <location>
        <position position="51"/>
    </location>
</feature>
<feature type="active site" description="Nucleophile" evidence="1">
    <location>
        <position position="54"/>
    </location>
</feature>
<feature type="active site" description="Nucleophile" evidence="1">
    <location>
        <position position="385"/>
    </location>
</feature>
<feature type="active site" description="Nucleophile" evidence="1">
    <location>
        <position position="388"/>
    </location>
</feature>
<feature type="site" description="Contributes to redox potential value" evidence="1">
    <location>
        <position position="52"/>
    </location>
</feature>
<feature type="site" description="Contributes to redox potential value" evidence="1">
    <location>
        <position position="53"/>
    </location>
</feature>
<feature type="site" description="Lowers pKa of C-terminal Cys of first active site" evidence="1">
    <location>
        <position position="114"/>
    </location>
</feature>
<feature type="site" description="Contributes to redox potential value" evidence="1">
    <location>
        <position position="386"/>
    </location>
</feature>
<feature type="site" description="Contributes to redox potential value" evidence="1">
    <location>
        <position position="387"/>
    </location>
</feature>
<feature type="site" description="Lowers pKa of C-terminal Cys of second active site" evidence="1">
    <location>
        <position position="448"/>
    </location>
</feature>
<feature type="glycosylation site" description="N-linked (GlcNAc...) asparagine" evidence="2">
    <location>
        <position position="161"/>
    </location>
</feature>
<feature type="glycosylation site" description="N-linked (GlcNAc...) asparagine" evidence="2">
    <location>
        <position position="257"/>
    </location>
</feature>
<feature type="disulfide bond" description="Redox-active" evidence="3">
    <location>
        <begin position="51"/>
        <end position="54"/>
    </location>
</feature>
<feature type="disulfide bond" description="Redox-active" evidence="3">
    <location>
        <begin position="385"/>
        <end position="388"/>
    </location>
</feature>
<gene>
    <name type="ORF">SPAC1F5.02</name>
</gene>
<dbReference type="EC" id="5.3.4.1"/>
<dbReference type="EMBL" id="CU329670">
    <property type="protein sequence ID" value="CAA92230.1"/>
    <property type="molecule type" value="Genomic_DNA"/>
</dbReference>
<dbReference type="PIR" id="T38093">
    <property type="entry name" value="T38093"/>
</dbReference>
<dbReference type="SMR" id="Q10057"/>
<dbReference type="BioGRID" id="277962">
    <property type="interactions" value="4"/>
</dbReference>
<dbReference type="FunCoup" id="Q10057">
    <property type="interactions" value="279"/>
</dbReference>
<dbReference type="STRING" id="284812.Q10057"/>
<dbReference type="iPTMnet" id="Q10057"/>
<dbReference type="PaxDb" id="4896-SPAC1F5.02.1"/>
<dbReference type="EnsemblFungi" id="SPAC1F5.02.1">
    <property type="protein sequence ID" value="SPAC1F5.02.1:pep"/>
    <property type="gene ID" value="SPAC1F5.02"/>
</dbReference>
<dbReference type="KEGG" id="spo:2541460"/>
<dbReference type="PomBase" id="SPAC1F5.02"/>
<dbReference type="VEuPathDB" id="FungiDB:SPAC1F5.02"/>
<dbReference type="eggNOG" id="KOG0190">
    <property type="taxonomic scope" value="Eukaryota"/>
</dbReference>
<dbReference type="HOGENOM" id="CLU_025879_5_0_1"/>
<dbReference type="InParanoid" id="Q10057"/>
<dbReference type="OMA" id="FFGMKKD"/>
<dbReference type="PhylomeDB" id="Q10057"/>
<dbReference type="Reactome" id="R-SPO-901042">
    <property type="pathway name" value="Calnexin/calreticulin cycle"/>
</dbReference>
<dbReference type="PRO" id="PR:Q10057"/>
<dbReference type="Proteomes" id="UP000002485">
    <property type="component" value="Chromosome I"/>
</dbReference>
<dbReference type="GO" id="GO:0005783">
    <property type="term" value="C:endoplasmic reticulum"/>
    <property type="evidence" value="ECO:0007005"/>
    <property type="project" value="PomBase"/>
</dbReference>
<dbReference type="GO" id="GO:0005788">
    <property type="term" value="C:endoplasmic reticulum lumen"/>
    <property type="evidence" value="ECO:0000266"/>
    <property type="project" value="PomBase"/>
</dbReference>
<dbReference type="GO" id="GO:0003756">
    <property type="term" value="F:protein disulfide isomerase activity"/>
    <property type="evidence" value="ECO:0000318"/>
    <property type="project" value="GO_Central"/>
</dbReference>
<dbReference type="GO" id="GO:0015035">
    <property type="term" value="F:protein-disulfide reductase activity"/>
    <property type="evidence" value="ECO:0000266"/>
    <property type="project" value="PomBase"/>
</dbReference>
<dbReference type="GO" id="GO:0006457">
    <property type="term" value="P:protein folding"/>
    <property type="evidence" value="ECO:0000318"/>
    <property type="project" value="GO_Central"/>
</dbReference>
<dbReference type="GO" id="GO:0034975">
    <property type="term" value="P:protein folding in endoplasmic reticulum"/>
    <property type="evidence" value="ECO:0000305"/>
    <property type="project" value="PomBase"/>
</dbReference>
<dbReference type="GO" id="GO:0034976">
    <property type="term" value="P:response to endoplasmic reticulum stress"/>
    <property type="evidence" value="ECO:0000318"/>
    <property type="project" value="GO_Central"/>
</dbReference>
<dbReference type="CDD" id="cd02961">
    <property type="entry name" value="PDI_a_family"/>
    <property type="match status" value="1"/>
</dbReference>
<dbReference type="CDD" id="cd02995">
    <property type="entry name" value="PDI_a_PDI_a'_C"/>
    <property type="match status" value="1"/>
</dbReference>
<dbReference type="CDD" id="cd02982">
    <property type="entry name" value="PDI_b'_family"/>
    <property type="match status" value="1"/>
</dbReference>
<dbReference type="CDD" id="cd02981">
    <property type="entry name" value="PDI_b_family"/>
    <property type="match status" value="1"/>
</dbReference>
<dbReference type="FunFam" id="3.40.30.10:FF:000027">
    <property type="entry name" value="protein disulfide-isomerase A2"/>
    <property type="match status" value="1"/>
</dbReference>
<dbReference type="FunFam" id="3.40.30.10:FF:000017">
    <property type="entry name" value="Protein disulfide-isomerase A4"/>
    <property type="match status" value="1"/>
</dbReference>
<dbReference type="Gene3D" id="3.40.30.10">
    <property type="entry name" value="Glutaredoxin"/>
    <property type="match status" value="4"/>
</dbReference>
<dbReference type="InterPro" id="IPR005788">
    <property type="entry name" value="PDI_thioredoxin-like_dom"/>
</dbReference>
<dbReference type="InterPro" id="IPR005792">
    <property type="entry name" value="Prot_disulphide_isomerase"/>
</dbReference>
<dbReference type="InterPro" id="IPR036249">
    <property type="entry name" value="Thioredoxin-like_sf"/>
</dbReference>
<dbReference type="InterPro" id="IPR017937">
    <property type="entry name" value="Thioredoxin_CS"/>
</dbReference>
<dbReference type="InterPro" id="IPR013766">
    <property type="entry name" value="Thioredoxin_domain"/>
</dbReference>
<dbReference type="NCBIfam" id="TIGR01130">
    <property type="entry name" value="ER_PDI_fam"/>
    <property type="match status" value="1"/>
</dbReference>
<dbReference type="NCBIfam" id="TIGR01126">
    <property type="entry name" value="pdi_dom"/>
    <property type="match status" value="2"/>
</dbReference>
<dbReference type="PANTHER" id="PTHR18929">
    <property type="entry name" value="PROTEIN DISULFIDE ISOMERASE"/>
    <property type="match status" value="1"/>
</dbReference>
<dbReference type="PANTHER" id="PTHR18929:SF132">
    <property type="entry name" value="PROTEIN DISULFIDE-ISOMERASE A3"/>
    <property type="match status" value="1"/>
</dbReference>
<dbReference type="Pfam" id="PF00085">
    <property type="entry name" value="Thioredoxin"/>
    <property type="match status" value="2"/>
</dbReference>
<dbReference type="Pfam" id="PF13848">
    <property type="entry name" value="Thioredoxin_6"/>
    <property type="match status" value="1"/>
</dbReference>
<dbReference type="PRINTS" id="PR00421">
    <property type="entry name" value="THIOREDOXIN"/>
</dbReference>
<dbReference type="SUPFAM" id="SSF52833">
    <property type="entry name" value="Thioredoxin-like"/>
    <property type="match status" value="4"/>
</dbReference>
<dbReference type="PROSITE" id="PS00014">
    <property type="entry name" value="ER_TARGET"/>
    <property type="match status" value="1"/>
</dbReference>
<dbReference type="PROSITE" id="PS00194">
    <property type="entry name" value="THIOREDOXIN_1"/>
    <property type="match status" value="2"/>
</dbReference>
<dbReference type="PROSITE" id="PS51352">
    <property type="entry name" value="THIOREDOXIN_2"/>
    <property type="match status" value="2"/>
</dbReference>
<comment type="function">
    <text evidence="1">Participates in the folding of proteins containing disulfide bonds, may be involved in glycosylation, prolyl hydroxylation and triglyceride transfer.</text>
</comment>
<comment type="catalytic activity">
    <reaction>
        <text>Catalyzes the rearrangement of -S-S- bonds in proteins.</text>
        <dbReference type="EC" id="5.3.4.1"/>
    </reaction>
</comment>
<comment type="subcellular location">
    <subcellularLocation>
        <location evidence="4">Endoplasmic reticulum lumen</location>
    </subcellularLocation>
</comment>
<comment type="similarity">
    <text evidence="6">Belongs to the protein disulfide isomerase family.</text>
</comment>
<accession>Q10057</accession>
<sequence>MKISNLLAAFLAFSGGFFCASAEVPKVNKEGLNELITADKVLMVKFYAPWCGHCKALAPEYESAADELEKDGISLVEVDCTEEGDLCSEYSIRGYPTLNVFKNGKQISQYSGPRKHDALVKYMRKQLLPTVKPISKDTLENFVEKADDLAVVAFFKDQKLNDTYTEVAEVMKDDFVFAASDDKELAKSLGSNFPGIVAFTKDAAQDSDKLVYTGDWDPASIADFIGVSSIPLLDELNQMTFGKYQQSGLPLGIIFYNSTESRDELYDVFQPLAKKYQDTLRFAFLDAVRYGAVAKQMNVESDWPAFVIANLKSMLKYPFPTTELTAKAMTKFVGDFVDGKLQPKIKSQPIPESQEDLVVLVADNFDDIVMDETKDVLVEFYAPWCGHCKNLAPTYEKLAEEYSDDSNVVVAKIDATENDISVSISGFPTIMFFKANDKVNPVRYEGDRTLEDLSAFIDKHASFEPIKKEKESVPAPDLEDQVAVEDEMADEL</sequence>
<organism>
    <name type="scientific">Schizosaccharomyces pombe (strain 972 / ATCC 24843)</name>
    <name type="common">Fission yeast</name>
    <dbReference type="NCBI Taxonomy" id="284812"/>
    <lineage>
        <taxon>Eukaryota</taxon>
        <taxon>Fungi</taxon>
        <taxon>Dikarya</taxon>
        <taxon>Ascomycota</taxon>
        <taxon>Taphrinomycotina</taxon>
        <taxon>Schizosaccharomycetes</taxon>
        <taxon>Schizosaccharomycetales</taxon>
        <taxon>Schizosaccharomycetaceae</taxon>
        <taxon>Schizosaccharomyces</taxon>
    </lineage>
</organism>
<reference key="1">
    <citation type="journal article" date="2002" name="Nature">
        <title>The genome sequence of Schizosaccharomyces pombe.</title>
        <authorList>
            <person name="Wood V."/>
            <person name="Gwilliam R."/>
            <person name="Rajandream M.A."/>
            <person name="Lyne M.H."/>
            <person name="Lyne R."/>
            <person name="Stewart A."/>
            <person name="Sgouros J.G."/>
            <person name="Peat N."/>
            <person name="Hayles J."/>
            <person name="Baker S.G."/>
            <person name="Basham D."/>
            <person name="Bowman S."/>
            <person name="Brooks K."/>
            <person name="Brown D."/>
            <person name="Brown S."/>
            <person name="Chillingworth T."/>
            <person name="Churcher C.M."/>
            <person name="Collins M."/>
            <person name="Connor R."/>
            <person name="Cronin A."/>
            <person name="Davis P."/>
            <person name="Feltwell T."/>
            <person name="Fraser A."/>
            <person name="Gentles S."/>
            <person name="Goble A."/>
            <person name="Hamlin N."/>
            <person name="Harris D.E."/>
            <person name="Hidalgo J."/>
            <person name="Hodgson G."/>
            <person name="Holroyd S."/>
            <person name="Hornsby T."/>
            <person name="Howarth S."/>
            <person name="Huckle E.J."/>
            <person name="Hunt S."/>
            <person name="Jagels K."/>
            <person name="James K.D."/>
            <person name="Jones L."/>
            <person name="Jones M."/>
            <person name="Leather S."/>
            <person name="McDonald S."/>
            <person name="McLean J."/>
            <person name="Mooney P."/>
            <person name="Moule S."/>
            <person name="Mungall K.L."/>
            <person name="Murphy L.D."/>
            <person name="Niblett D."/>
            <person name="Odell C."/>
            <person name="Oliver K."/>
            <person name="O'Neil S."/>
            <person name="Pearson D."/>
            <person name="Quail M.A."/>
            <person name="Rabbinowitsch E."/>
            <person name="Rutherford K.M."/>
            <person name="Rutter S."/>
            <person name="Saunders D."/>
            <person name="Seeger K."/>
            <person name="Sharp S."/>
            <person name="Skelton J."/>
            <person name="Simmonds M.N."/>
            <person name="Squares R."/>
            <person name="Squares S."/>
            <person name="Stevens K."/>
            <person name="Taylor K."/>
            <person name="Taylor R.G."/>
            <person name="Tivey A."/>
            <person name="Walsh S.V."/>
            <person name="Warren T."/>
            <person name="Whitehead S."/>
            <person name="Woodward J.R."/>
            <person name="Volckaert G."/>
            <person name="Aert R."/>
            <person name="Robben J."/>
            <person name="Grymonprez B."/>
            <person name="Weltjens I."/>
            <person name="Vanstreels E."/>
            <person name="Rieger M."/>
            <person name="Schaefer M."/>
            <person name="Mueller-Auer S."/>
            <person name="Gabel C."/>
            <person name="Fuchs M."/>
            <person name="Duesterhoeft A."/>
            <person name="Fritzc C."/>
            <person name="Holzer E."/>
            <person name="Moestl D."/>
            <person name="Hilbert H."/>
            <person name="Borzym K."/>
            <person name="Langer I."/>
            <person name="Beck A."/>
            <person name="Lehrach H."/>
            <person name="Reinhardt R."/>
            <person name="Pohl T.M."/>
            <person name="Eger P."/>
            <person name="Zimmermann W."/>
            <person name="Wedler H."/>
            <person name="Wambutt R."/>
            <person name="Purnelle B."/>
            <person name="Goffeau A."/>
            <person name="Cadieu E."/>
            <person name="Dreano S."/>
            <person name="Gloux S."/>
            <person name="Lelaure V."/>
            <person name="Mottier S."/>
            <person name="Galibert F."/>
            <person name="Aves S.J."/>
            <person name="Xiang Z."/>
            <person name="Hunt C."/>
            <person name="Moore K."/>
            <person name="Hurst S.M."/>
            <person name="Lucas M."/>
            <person name="Rochet M."/>
            <person name="Gaillardin C."/>
            <person name="Tallada V.A."/>
            <person name="Garzon A."/>
            <person name="Thode G."/>
            <person name="Daga R.R."/>
            <person name="Cruzado L."/>
            <person name="Jimenez J."/>
            <person name="Sanchez M."/>
            <person name="del Rey F."/>
            <person name="Benito J."/>
            <person name="Dominguez A."/>
            <person name="Revuelta J.L."/>
            <person name="Moreno S."/>
            <person name="Armstrong J."/>
            <person name="Forsburg S.L."/>
            <person name="Cerutti L."/>
            <person name="Lowe T."/>
            <person name="McCombie W.R."/>
            <person name="Paulsen I."/>
            <person name="Potashkin J."/>
            <person name="Shpakovski G.V."/>
            <person name="Ussery D."/>
            <person name="Barrell B.G."/>
            <person name="Nurse P."/>
        </authorList>
    </citation>
    <scope>NUCLEOTIDE SEQUENCE [LARGE SCALE GENOMIC DNA]</scope>
    <source>
        <strain>972 / ATCC 24843</strain>
    </source>
</reference>
<protein>
    <recommendedName>
        <fullName>Putative protein disulfide-isomerase C1F5.02</fullName>
        <ecNumber>5.3.4.1</ecNumber>
    </recommendedName>
</protein>